<accession>Q0I490</accession>
<reference key="1">
    <citation type="journal article" date="2007" name="J. Bacteriol.">
        <title>Complete genome sequence of Haemophilus somnus (Histophilus somni) strain 129Pt and comparison to Haemophilus ducreyi 35000HP and Haemophilus influenzae Rd.</title>
        <authorList>
            <person name="Challacombe J.F."/>
            <person name="Duncan A.J."/>
            <person name="Brettin T.S."/>
            <person name="Bruce D."/>
            <person name="Chertkov O."/>
            <person name="Detter J.C."/>
            <person name="Han C.S."/>
            <person name="Misra M."/>
            <person name="Richardson P."/>
            <person name="Tapia R."/>
            <person name="Thayer N."/>
            <person name="Xie G."/>
            <person name="Inzana T.J."/>
        </authorList>
    </citation>
    <scope>NUCLEOTIDE SEQUENCE [LARGE SCALE GENOMIC DNA]</scope>
    <source>
        <strain>129Pt</strain>
    </source>
</reference>
<name>ARGR_HISS1</name>
<keyword id="KW-0028">Amino-acid biosynthesis</keyword>
<keyword id="KW-0055">Arginine biosynthesis</keyword>
<keyword id="KW-0963">Cytoplasm</keyword>
<keyword id="KW-0238">DNA-binding</keyword>
<keyword id="KW-0678">Repressor</keyword>
<keyword id="KW-0804">Transcription</keyword>
<keyword id="KW-0805">Transcription regulation</keyword>
<organism>
    <name type="scientific">Histophilus somni (strain 129Pt)</name>
    <name type="common">Haemophilus somnus</name>
    <dbReference type="NCBI Taxonomy" id="205914"/>
    <lineage>
        <taxon>Bacteria</taxon>
        <taxon>Pseudomonadati</taxon>
        <taxon>Pseudomonadota</taxon>
        <taxon>Gammaproteobacteria</taxon>
        <taxon>Pasteurellales</taxon>
        <taxon>Pasteurellaceae</taxon>
        <taxon>Histophilus</taxon>
    </lineage>
</organism>
<protein>
    <recommendedName>
        <fullName evidence="1">Arginine repressor</fullName>
    </recommendedName>
</protein>
<feature type="chain" id="PRO_1000023571" description="Arginine repressor">
    <location>
        <begin position="1"/>
        <end position="155"/>
    </location>
</feature>
<gene>
    <name evidence="1" type="primary">argR</name>
    <name type="ordered locus">HS_1056</name>
</gene>
<proteinExistence type="inferred from homology"/>
<sequence>MINEKADSLVNAFKELLSQESFGSQSEIVSALQQMGFTHVNQSKVSRMLTKFGAVRTRNTRMEMVYCLPNELSVPNTGSPLKNLVLDVDHNETLIVIKTSPGAAQLIARLLDSVGKSEGILGTIAGDDTIFVTPTTGNDIQVLITNIQKLFESSL</sequence>
<comment type="function">
    <text evidence="1">Regulates arginine biosynthesis genes.</text>
</comment>
<comment type="pathway">
    <text>Amino-acid biosynthesis; L-arginine biosynthesis [regulation].</text>
</comment>
<comment type="subcellular location">
    <subcellularLocation>
        <location evidence="1">Cytoplasm</location>
    </subcellularLocation>
</comment>
<comment type="similarity">
    <text evidence="1">Belongs to the ArgR family.</text>
</comment>
<evidence type="ECO:0000255" key="1">
    <source>
        <dbReference type="HAMAP-Rule" id="MF_00173"/>
    </source>
</evidence>
<dbReference type="EMBL" id="CP000436">
    <property type="protein sequence ID" value="ABI25331.1"/>
    <property type="molecule type" value="Genomic_DNA"/>
</dbReference>
<dbReference type="SMR" id="Q0I490"/>
<dbReference type="KEGG" id="hso:HS_1056"/>
<dbReference type="eggNOG" id="COG1438">
    <property type="taxonomic scope" value="Bacteria"/>
</dbReference>
<dbReference type="HOGENOM" id="CLU_097103_2_0_6"/>
<dbReference type="UniPathway" id="UPA00068"/>
<dbReference type="GO" id="GO:0005737">
    <property type="term" value="C:cytoplasm"/>
    <property type="evidence" value="ECO:0007669"/>
    <property type="project" value="UniProtKB-SubCell"/>
</dbReference>
<dbReference type="GO" id="GO:0034618">
    <property type="term" value="F:arginine binding"/>
    <property type="evidence" value="ECO:0007669"/>
    <property type="project" value="InterPro"/>
</dbReference>
<dbReference type="GO" id="GO:0003677">
    <property type="term" value="F:DNA binding"/>
    <property type="evidence" value="ECO:0007669"/>
    <property type="project" value="UniProtKB-KW"/>
</dbReference>
<dbReference type="GO" id="GO:0003700">
    <property type="term" value="F:DNA-binding transcription factor activity"/>
    <property type="evidence" value="ECO:0007669"/>
    <property type="project" value="UniProtKB-UniRule"/>
</dbReference>
<dbReference type="GO" id="GO:0006526">
    <property type="term" value="P:L-arginine biosynthetic process"/>
    <property type="evidence" value="ECO:0007669"/>
    <property type="project" value="UniProtKB-UniPathway"/>
</dbReference>
<dbReference type="GO" id="GO:0051259">
    <property type="term" value="P:protein complex oligomerization"/>
    <property type="evidence" value="ECO:0007669"/>
    <property type="project" value="InterPro"/>
</dbReference>
<dbReference type="GO" id="GO:1900079">
    <property type="term" value="P:regulation of arginine biosynthetic process"/>
    <property type="evidence" value="ECO:0007669"/>
    <property type="project" value="UniProtKB-UniRule"/>
</dbReference>
<dbReference type="Gene3D" id="3.30.1360.40">
    <property type="match status" value="1"/>
</dbReference>
<dbReference type="Gene3D" id="1.10.10.10">
    <property type="entry name" value="Winged helix-like DNA-binding domain superfamily/Winged helix DNA-binding domain"/>
    <property type="match status" value="1"/>
</dbReference>
<dbReference type="HAMAP" id="MF_00173">
    <property type="entry name" value="Arg_repressor"/>
    <property type="match status" value="1"/>
</dbReference>
<dbReference type="InterPro" id="IPR001669">
    <property type="entry name" value="Arg_repress"/>
</dbReference>
<dbReference type="InterPro" id="IPR020899">
    <property type="entry name" value="Arg_repress_C"/>
</dbReference>
<dbReference type="InterPro" id="IPR036251">
    <property type="entry name" value="Arg_repress_C_sf"/>
</dbReference>
<dbReference type="InterPro" id="IPR020900">
    <property type="entry name" value="Arg_repress_DNA-bd"/>
</dbReference>
<dbReference type="InterPro" id="IPR036388">
    <property type="entry name" value="WH-like_DNA-bd_sf"/>
</dbReference>
<dbReference type="InterPro" id="IPR036390">
    <property type="entry name" value="WH_DNA-bd_sf"/>
</dbReference>
<dbReference type="NCBIfam" id="TIGR01529">
    <property type="entry name" value="argR_whole"/>
    <property type="match status" value="1"/>
</dbReference>
<dbReference type="NCBIfam" id="NF003457">
    <property type="entry name" value="PRK05066.1"/>
    <property type="match status" value="1"/>
</dbReference>
<dbReference type="PANTHER" id="PTHR34471">
    <property type="entry name" value="ARGININE REPRESSOR"/>
    <property type="match status" value="1"/>
</dbReference>
<dbReference type="PANTHER" id="PTHR34471:SF1">
    <property type="entry name" value="ARGININE REPRESSOR"/>
    <property type="match status" value="1"/>
</dbReference>
<dbReference type="Pfam" id="PF01316">
    <property type="entry name" value="Arg_repressor"/>
    <property type="match status" value="1"/>
</dbReference>
<dbReference type="Pfam" id="PF02863">
    <property type="entry name" value="Arg_repressor_C"/>
    <property type="match status" value="1"/>
</dbReference>
<dbReference type="PRINTS" id="PR01467">
    <property type="entry name" value="ARGREPRESSOR"/>
</dbReference>
<dbReference type="SUPFAM" id="SSF55252">
    <property type="entry name" value="C-terminal domain of arginine repressor"/>
    <property type="match status" value="1"/>
</dbReference>
<dbReference type="SUPFAM" id="SSF46785">
    <property type="entry name" value="Winged helix' DNA-binding domain"/>
    <property type="match status" value="1"/>
</dbReference>